<sequence>MVYIDPKHLELEDRVVAINRVTKVVKGGRRLRFAALVVVGDKNGHVGFGTGKAQEVPEAIRKAIEDAKKNLVEVPMVGSTIPHEVIGVFGGGRILMKPAVEGSGVAAGGPVRAVLELAGVADITSKSLGSNTPINVVRATVEGLKQLKRAEEVAALRGKSVEEIIG</sequence>
<evidence type="ECO:0000255" key="1">
    <source>
        <dbReference type="HAMAP-Rule" id="MF_01307"/>
    </source>
</evidence>
<evidence type="ECO:0000305" key="2"/>
<evidence type="ECO:0007829" key="3">
    <source>
        <dbReference type="PDB" id="6WUB"/>
    </source>
</evidence>
<protein>
    <recommendedName>
        <fullName evidence="1">Small ribosomal subunit protein uS5</fullName>
    </recommendedName>
    <alternativeName>
        <fullName evidence="2">30S ribosomal protein S5</fullName>
    </alternativeName>
</protein>
<proteinExistence type="evidence at protein level"/>
<gene>
    <name evidence="1" type="primary">rpsE</name>
    <name type="ordered locus">EF_0224</name>
</gene>
<organism>
    <name type="scientific">Enterococcus faecalis (strain ATCC 700802 / V583)</name>
    <dbReference type="NCBI Taxonomy" id="226185"/>
    <lineage>
        <taxon>Bacteria</taxon>
        <taxon>Bacillati</taxon>
        <taxon>Bacillota</taxon>
        <taxon>Bacilli</taxon>
        <taxon>Lactobacillales</taxon>
        <taxon>Enterococcaceae</taxon>
        <taxon>Enterococcus</taxon>
    </lineage>
</organism>
<feature type="chain" id="PRO_0000131514" description="Small ribosomal subunit protein uS5">
    <location>
        <begin position="1"/>
        <end position="166"/>
    </location>
</feature>
<feature type="domain" description="S5 DRBM" evidence="1">
    <location>
        <begin position="11"/>
        <end position="74"/>
    </location>
</feature>
<feature type="strand" evidence="3">
    <location>
        <begin position="14"/>
        <end position="24"/>
    </location>
</feature>
<feature type="strand" evidence="3">
    <location>
        <begin position="26"/>
        <end position="40"/>
    </location>
</feature>
<feature type="strand" evidence="3">
    <location>
        <begin position="42"/>
        <end position="44"/>
    </location>
</feature>
<feature type="strand" evidence="3">
    <location>
        <begin position="46"/>
        <end position="55"/>
    </location>
</feature>
<feature type="helix" evidence="3">
    <location>
        <begin position="56"/>
        <end position="68"/>
    </location>
</feature>
<feature type="strand" evidence="3">
    <location>
        <begin position="77"/>
        <end position="80"/>
    </location>
</feature>
<feature type="strand" evidence="3">
    <location>
        <begin position="85"/>
        <end position="91"/>
    </location>
</feature>
<feature type="strand" evidence="3">
    <location>
        <begin position="93"/>
        <end position="98"/>
    </location>
</feature>
<feature type="helix" evidence="3">
    <location>
        <begin position="109"/>
        <end position="116"/>
    </location>
</feature>
<feature type="turn" evidence="3">
    <location>
        <begin position="117"/>
        <end position="119"/>
    </location>
</feature>
<feature type="strand" evidence="3">
    <location>
        <begin position="122"/>
        <end position="127"/>
    </location>
</feature>
<feature type="helix" evidence="3">
    <location>
        <begin position="133"/>
        <end position="144"/>
    </location>
</feature>
<feature type="helix" evidence="3">
    <location>
        <begin position="150"/>
        <end position="156"/>
    </location>
</feature>
<reference key="1">
    <citation type="journal article" date="2003" name="Science">
        <title>Role of mobile DNA in the evolution of vancomycin-resistant Enterococcus faecalis.</title>
        <authorList>
            <person name="Paulsen I.T."/>
            <person name="Banerjei L."/>
            <person name="Myers G.S.A."/>
            <person name="Nelson K.E."/>
            <person name="Seshadri R."/>
            <person name="Read T.D."/>
            <person name="Fouts D.E."/>
            <person name="Eisen J.A."/>
            <person name="Gill S.R."/>
            <person name="Heidelberg J.F."/>
            <person name="Tettelin H."/>
            <person name="Dodson R.J."/>
            <person name="Umayam L.A."/>
            <person name="Brinkac L.M."/>
            <person name="Beanan M.J."/>
            <person name="Daugherty S.C."/>
            <person name="DeBoy R.T."/>
            <person name="Durkin S.A."/>
            <person name="Kolonay J.F."/>
            <person name="Madupu R."/>
            <person name="Nelson W.C."/>
            <person name="Vamathevan J.J."/>
            <person name="Tran B."/>
            <person name="Upton J."/>
            <person name="Hansen T."/>
            <person name="Shetty J."/>
            <person name="Khouri H.M."/>
            <person name="Utterback T.R."/>
            <person name="Radune D."/>
            <person name="Ketchum K.A."/>
            <person name="Dougherty B.A."/>
            <person name="Fraser C.M."/>
        </authorList>
    </citation>
    <scope>NUCLEOTIDE SEQUENCE [LARGE SCALE GENOMIC DNA]</scope>
    <source>
        <strain>ATCC 700802 / V583</strain>
    </source>
</reference>
<dbReference type="EMBL" id="AE016830">
    <property type="protein sequence ID" value="AAO80092.1"/>
    <property type="molecule type" value="Genomic_DNA"/>
</dbReference>
<dbReference type="RefSeq" id="NP_814021.1">
    <property type="nucleotide sequence ID" value="NC_004668.1"/>
</dbReference>
<dbReference type="RefSeq" id="WP_002356219.1">
    <property type="nucleotide sequence ID" value="NZ_KE136524.1"/>
</dbReference>
<dbReference type="PDB" id="6WUB">
    <property type="method" value="EM"/>
    <property type="resolution" value="3.20 A"/>
    <property type="chains" value="e=3-165"/>
</dbReference>
<dbReference type="PDB" id="7P7Q">
    <property type="method" value="EM"/>
    <property type="resolution" value="2.40 A"/>
    <property type="chains" value="f=1-166"/>
</dbReference>
<dbReference type="PDB" id="7P7R">
    <property type="method" value="EM"/>
    <property type="resolution" value="2.90 A"/>
    <property type="chains" value="f=1-166"/>
</dbReference>
<dbReference type="PDBsum" id="6WUB"/>
<dbReference type="PDBsum" id="7P7Q"/>
<dbReference type="PDBsum" id="7P7R"/>
<dbReference type="EMDB" id="EMD-13241"/>
<dbReference type="EMDB" id="EMD-13242"/>
<dbReference type="SMR" id="Q839E7"/>
<dbReference type="STRING" id="226185.EF_0224"/>
<dbReference type="EnsemblBacteria" id="AAO80092">
    <property type="protein sequence ID" value="AAO80092"/>
    <property type="gene ID" value="EF_0224"/>
</dbReference>
<dbReference type="GeneID" id="60892718"/>
<dbReference type="KEGG" id="efa:EF0224"/>
<dbReference type="PATRIC" id="fig|226185.45.peg.43"/>
<dbReference type="eggNOG" id="COG0098">
    <property type="taxonomic scope" value="Bacteria"/>
</dbReference>
<dbReference type="HOGENOM" id="CLU_065898_2_2_9"/>
<dbReference type="Proteomes" id="UP000001415">
    <property type="component" value="Chromosome"/>
</dbReference>
<dbReference type="GO" id="GO:0015935">
    <property type="term" value="C:small ribosomal subunit"/>
    <property type="evidence" value="ECO:0007669"/>
    <property type="project" value="InterPro"/>
</dbReference>
<dbReference type="GO" id="GO:0019843">
    <property type="term" value="F:rRNA binding"/>
    <property type="evidence" value="ECO:0007669"/>
    <property type="project" value="UniProtKB-UniRule"/>
</dbReference>
<dbReference type="GO" id="GO:0003735">
    <property type="term" value="F:structural constituent of ribosome"/>
    <property type="evidence" value="ECO:0007669"/>
    <property type="project" value="InterPro"/>
</dbReference>
<dbReference type="GO" id="GO:0006412">
    <property type="term" value="P:translation"/>
    <property type="evidence" value="ECO:0007669"/>
    <property type="project" value="UniProtKB-UniRule"/>
</dbReference>
<dbReference type="FunFam" id="3.30.160.20:FF:000001">
    <property type="entry name" value="30S ribosomal protein S5"/>
    <property type="match status" value="1"/>
</dbReference>
<dbReference type="FunFam" id="3.30.230.10:FF:000002">
    <property type="entry name" value="30S ribosomal protein S5"/>
    <property type="match status" value="1"/>
</dbReference>
<dbReference type="Gene3D" id="3.30.160.20">
    <property type="match status" value="1"/>
</dbReference>
<dbReference type="Gene3D" id="3.30.230.10">
    <property type="match status" value="1"/>
</dbReference>
<dbReference type="HAMAP" id="MF_01307_B">
    <property type="entry name" value="Ribosomal_uS5_B"/>
    <property type="match status" value="1"/>
</dbReference>
<dbReference type="InterPro" id="IPR020568">
    <property type="entry name" value="Ribosomal_Su5_D2-typ_SF"/>
</dbReference>
<dbReference type="InterPro" id="IPR000851">
    <property type="entry name" value="Ribosomal_uS5"/>
</dbReference>
<dbReference type="InterPro" id="IPR005712">
    <property type="entry name" value="Ribosomal_uS5_bac-type"/>
</dbReference>
<dbReference type="InterPro" id="IPR005324">
    <property type="entry name" value="Ribosomal_uS5_C"/>
</dbReference>
<dbReference type="InterPro" id="IPR013810">
    <property type="entry name" value="Ribosomal_uS5_N"/>
</dbReference>
<dbReference type="InterPro" id="IPR018192">
    <property type="entry name" value="Ribosomal_uS5_N_CS"/>
</dbReference>
<dbReference type="InterPro" id="IPR014721">
    <property type="entry name" value="Ribsml_uS5_D2-typ_fold_subgr"/>
</dbReference>
<dbReference type="NCBIfam" id="TIGR01021">
    <property type="entry name" value="rpsE_bact"/>
    <property type="match status" value="1"/>
</dbReference>
<dbReference type="PANTHER" id="PTHR48277">
    <property type="entry name" value="MITOCHONDRIAL RIBOSOMAL PROTEIN S5"/>
    <property type="match status" value="1"/>
</dbReference>
<dbReference type="PANTHER" id="PTHR48277:SF1">
    <property type="entry name" value="MITOCHONDRIAL RIBOSOMAL PROTEIN S5"/>
    <property type="match status" value="1"/>
</dbReference>
<dbReference type="Pfam" id="PF00333">
    <property type="entry name" value="Ribosomal_S5"/>
    <property type="match status" value="1"/>
</dbReference>
<dbReference type="Pfam" id="PF03719">
    <property type="entry name" value="Ribosomal_S5_C"/>
    <property type="match status" value="1"/>
</dbReference>
<dbReference type="SUPFAM" id="SSF54768">
    <property type="entry name" value="dsRNA-binding domain-like"/>
    <property type="match status" value="1"/>
</dbReference>
<dbReference type="SUPFAM" id="SSF54211">
    <property type="entry name" value="Ribosomal protein S5 domain 2-like"/>
    <property type="match status" value="1"/>
</dbReference>
<dbReference type="PROSITE" id="PS00585">
    <property type="entry name" value="RIBOSOMAL_S5"/>
    <property type="match status" value="1"/>
</dbReference>
<dbReference type="PROSITE" id="PS50881">
    <property type="entry name" value="S5_DSRBD"/>
    <property type="match status" value="1"/>
</dbReference>
<accession>Q839E7</accession>
<name>RS5_ENTFA</name>
<comment type="function">
    <text evidence="1">With S4 and S12 plays an important role in translational accuracy.</text>
</comment>
<comment type="function">
    <text evidence="1">Located at the back of the 30S subunit body where it stabilizes the conformation of the head with respect to the body.</text>
</comment>
<comment type="subunit">
    <text evidence="1">Part of the 30S ribosomal subunit. Contacts proteins S4 and S8.</text>
</comment>
<comment type="domain">
    <text>The N-terminal domain interacts with the head of the 30S subunit; the C-terminal domain interacts with the body and contacts protein S4. The interaction surface between S4 and S5 is involved in control of translational fidelity.</text>
</comment>
<comment type="similarity">
    <text evidence="1">Belongs to the universal ribosomal protein uS5 family.</text>
</comment>
<keyword id="KW-0002">3D-structure</keyword>
<keyword id="KW-1185">Reference proteome</keyword>
<keyword id="KW-0687">Ribonucleoprotein</keyword>
<keyword id="KW-0689">Ribosomal protein</keyword>
<keyword id="KW-0694">RNA-binding</keyword>
<keyword id="KW-0699">rRNA-binding</keyword>